<proteinExistence type="inferred from homology"/>
<name>RL9_DINSH</name>
<feature type="chain" id="PRO_1000081477" description="Large ribosomal subunit protein bL9">
    <location>
        <begin position="1"/>
        <end position="209"/>
    </location>
</feature>
<feature type="region of interest" description="Disordered" evidence="2">
    <location>
        <begin position="184"/>
        <end position="209"/>
    </location>
</feature>
<reference key="1">
    <citation type="journal article" date="2010" name="ISME J.">
        <title>The complete genome sequence of the algal symbiont Dinoroseobacter shibae: a hitchhiker's guide to life in the sea.</title>
        <authorList>
            <person name="Wagner-Dobler I."/>
            <person name="Ballhausen B."/>
            <person name="Berger M."/>
            <person name="Brinkhoff T."/>
            <person name="Buchholz I."/>
            <person name="Bunk B."/>
            <person name="Cypionka H."/>
            <person name="Daniel R."/>
            <person name="Drepper T."/>
            <person name="Gerdts G."/>
            <person name="Hahnke S."/>
            <person name="Han C."/>
            <person name="Jahn D."/>
            <person name="Kalhoefer D."/>
            <person name="Kiss H."/>
            <person name="Klenk H.P."/>
            <person name="Kyrpides N."/>
            <person name="Liebl W."/>
            <person name="Liesegang H."/>
            <person name="Meincke L."/>
            <person name="Pati A."/>
            <person name="Petersen J."/>
            <person name="Piekarski T."/>
            <person name="Pommerenke C."/>
            <person name="Pradella S."/>
            <person name="Pukall R."/>
            <person name="Rabus R."/>
            <person name="Stackebrandt E."/>
            <person name="Thole S."/>
            <person name="Thompson L."/>
            <person name="Tielen P."/>
            <person name="Tomasch J."/>
            <person name="von Jan M."/>
            <person name="Wanphrut N."/>
            <person name="Wichels A."/>
            <person name="Zech H."/>
            <person name="Simon M."/>
        </authorList>
    </citation>
    <scope>NUCLEOTIDE SEQUENCE [LARGE SCALE GENOMIC DNA]</scope>
    <source>
        <strain>DSM 16493 / NCIMB 14021 / DFL 12</strain>
    </source>
</reference>
<gene>
    <name evidence="1" type="primary">rplI</name>
    <name type="ordered locus">Dshi_2188</name>
</gene>
<sequence>MQVILLERVAKLGQMGEVVDVKPGYARNYLLPQGKALNASEANIAQFEAQKAQLEARNLETRKEAEAMAEKLDGQQFIVIRSASDAGALYGSVTTRDAAEAATADGFSLDRKQVSLSRPIKELGLHTVHVTLHPEVTADIVLNVARSAEEAELQASGKSIQELAAEAEAEAEFEIAELFDDIGSAASEDSDLVETPEDRATEEAEDEQP</sequence>
<protein>
    <recommendedName>
        <fullName evidence="1">Large ribosomal subunit protein bL9</fullName>
    </recommendedName>
    <alternativeName>
        <fullName evidence="3">50S ribosomal protein L9</fullName>
    </alternativeName>
</protein>
<keyword id="KW-1185">Reference proteome</keyword>
<keyword id="KW-0687">Ribonucleoprotein</keyword>
<keyword id="KW-0689">Ribosomal protein</keyword>
<keyword id="KW-0694">RNA-binding</keyword>
<keyword id="KW-0699">rRNA-binding</keyword>
<organism>
    <name type="scientific">Dinoroseobacter shibae (strain DSM 16493 / NCIMB 14021 / DFL 12)</name>
    <dbReference type="NCBI Taxonomy" id="398580"/>
    <lineage>
        <taxon>Bacteria</taxon>
        <taxon>Pseudomonadati</taxon>
        <taxon>Pseudomonadota</taxon>
        <taxon>Alphaproteobacteria</taxon>
        <taxon>Rhodobacterales</taxon>
        <taxon>Roseobacteraceae</taxon>
        <taxon>Dinoroseobacter</taxon>
    </lineage>
</organism>
<accession>A8LQQ7</accession>
<comment type="function">
    <text evidence="1">Binds to the 23S rRNA.</text>
</comment>
<comment type="similarity">
    <text evidence="1">Belongs to the bacterial ribosomal protein bL9 family.</text>
</comment>
<evidence type="ECO:0000255" key="1">
    <source>
        <dbReference type="HAMAP-Rule" id="MF_00503"/>
    </source>
</evidence>
<evidence type="ECO:0000256" key="2">
    <source>
        <dbReference type="SAM" id="MobiDB-lite"/>
    </source>
</evidence>
<evidence type="ECO:0000305" key="3"/>
<dbReference type="EMBL" id="CP000830">
    <property type="protein sequence ID" value="ABV93924.1"/>
    <property type="molecule type" value="Genomic_DNA"/>
</dbReference>
<dbReference type="RefSeq" id="WP_012178855.1">
    <property type="nucleotide sequence ID" value="NC_009952.1"/>
</dbReference>
<dbReference type="SMR" id="A8LQQ7"/>
<dbReference type="STRING" id="398580.Dshi_2188"/>
<dbReference type="KEGG" id="dsh:Dshi_2188"/>
<dbReference type="eggNOG" id="COG0359">
    <property type="taxonomic scope" value="Bacteria"/>
</dbReference>
<dbReference type="HOGENOM" id="CLU_078938_1_0_5"/>
<dbReference type="OrthoDB" id="9788336at2"/>
<dbReference type="Proteomes" id="UP000006833">
    <property type="component" value="Chromosome"/>
</dbReference>
<dbReference type="GO" id="GO:1990904">
    <property type="term" value="C:ribonucleoprotein complex"/>
    <property type="evidence" value="ECO:0007669"/>
    <property type="project" value="UniProtKB-KW"/>
</dbReference>
<dbReference type="GO" id="GO:0005840">
    <property type="term" value="C:ribosome"/>
    <property type="evidence" value="ECO:0007669"/>
    <property type="project" value="UniProtKB-KW"/>
</dbReference>
<dbReference type="GO" id="GO:0019843">
    <property type="term" value="F:rRNA binding"/>
    <property type="evidence" value="ECO:0007669"/>
    <property type="project" value="UniProtKB-UniRule"/>
</dbReference>
<dbReference type="GO" id="GO:0003735">
    <property type="term" value="F:structural constituent of ribosome"/>
    <property type="evidence" value="ECO:0007669"/>
    <property type="project" value="InterPro"/>
</dbReference>
<dbReference type="GO" id="GO:0006412">
    <property type="term" value="P:translation"/>
    <property type="evidence" value="ECO:0007669"/>
    <property type="project" value="UniProtKB-UniRule"/>
</dbReference>
<dbReference type="Gene3D" id="3.10.430.100">
    <property type="entry name" value="Ribosomal protein L9, C-terminal domain"/>
    <property type="match status" value="1"/>
</dbReference>
<dbReference type="Gene3D" id="3.40.5.10">
    <property type="entry name" value="Ribosomal protein L9, N-terminal domain"/>
    <property type="match status" value="1"/>
</dbReference>
<dbReference type="HAMAP" id="MF_00503">
    <property type="entry name" value="Ribosomal_bL9"/>
    <property type="match status" value="1"/>
</dbReference>
<dbReference type="InterPro" id="IPR000244">
    <property type="entry name" value="Ribosomal_bL9"/>
</dbReference>
<dbReference type="InterPro" id="IPR009027">
    <property type="entry name" value="Ribosomal_bL9/RNase_H1_N"/>
</dbReference>
<dbReference type="InterPro" id="IPR020594">
    <property type="entry name" value="Ribosomal_bL9_bac/chp"/>
</dbReference>
<dbReference type="InterPro" id="IPR020069">
    <property type="entry name" value="Ribosomal_bL9_C"/>
</dbReference>
<dbReference type="InterPro" id="IPR036791">
    <property type="entry name" value="Ribosomal_bL9_C_sf"/>
</dbReference>
<dbReference type="InterPro" id="IPR020070">
    <property type="entry name" value="Ribosomal_bL9_N"/>
</dbReference>
<dbReference type="InterPro" id="IPR036935">
    <property type="entry name" value="Ribosomal_bL9_N_sf"/>
</dbReference>
<dbReference type="NCBIfam" id="TIGR00158">
    <property type="entry name" value="L9"/>
    <property type="match status" value="1"/>
</dbReference>
<dbReference type="PANTHER" id="PTHR21368">
    <property type="entry name" value="50S RIBOSOMAL PROTEIN L9"/>
    <property type="match status" value="1"/>
</dbReference>
<dbReference type="Pfam" id="PF03948">
    <property type="entry name" value="Ribosomal_L9_C"/>
    <property type="match status" value="1"/>
</dbReference>
<dbReference type="Pfam" id="PF01281">
    <property type="entry name" value="Ribosomal_L9_N"/>
    <property type="match status" value="1"/>
</dbReference>
<dbReference type="SUPFAM" id="SSF55658">
    <property type="entry name" value="L9 N-domain-like"/>
    <property type="match status" value="1"/>
</dbReference>
<dbReference type="SUPFAM" id="SSF55653">
    <property type="entry name" value="Ribosomal protein L9 C-domain"/>
    <property type="match status" value="1"/>
</dbReference>
<dbReference type="PROSITE" id="PS00651">
    <property type="entry name" value="RIBOSOMAL_L9"/>
    <property type="match status" value="1"/>
</dbReference>